<organism>
    <name type="scientific">Arabidopsis thaliana</name>
    <name type="common">Mouse-ear cress</name>
    <dbReference type="NCBI Taxonomy" id="3702"/>
    <lineage>
        <taxon>Eukaryota</taxon>
        <taxon>Viridiplantae</taxon>
        <taxon>Streptophyta</taxon>
        <taxon>Embryophyta</taxon>
        <taxon>Tracheophyta</taxon>
        <taxon>Spermatophyta</taxon>
        <taxon>Magnoliopsida</taxon>
        <taxon>eudicotyledons</taxon>
        <taxon>Gunneridae</taxon>
        <taxon>Pentapetalae</taxon>
        <taxon>rosids</taxon>
        <taxon>malvids</taxon>
        <taxon>Brassicales</taxon>
        <taxon>Brassicaceae</taxon>
        <taxon>Camelineae</taxon>
        <taxon>Arabidopsis</taxon>
    </lineage>
</organism>
<keyword id="KW-1185">Reference proteome</keyword>
<keyword id="KW-0677">Repeat</keyword>
<sequence length="763" mass="85770">MGPPLLPKHVTAVIKCQKDPMKALEMFNSMRKEVGFKHTLSTYRSVIEKLGYYGKFEAMEEVLVDMRENVGNHMLEGVYVGAMKNYGRKGKVQEAVNVFERMDFYDCEPTVFSYNAIMSVLVDSGYFDQAHKVYMRMRDRGITPDVYSFTIRMKSFCKTSRPHAALRLLNNMSSQGCEMNVVAYCTVVGGFYEENFKAEGYELFGKMLASGVSLCLSTFNKLLRVLCKKGDVKECEKLLDKVIKRGVLPNLFTYNLFIQGLCQRGELDGAVRMVGCLIEQGPKPDVITYNNLIYGLCKNSKFQEAEVYLGKMVNEGLEPDSYTYNTLIAGYCKGGMVQLAERIVGDAVFNGFVPDQFTYRSLIDGLCHEGETNRALALFNEALGKGIKPNVILYNTLIKGLSNQGMILEAAQLANEMSEKGLIPEVQTFNILVNGLCKMGCVSDADGLVKVMISKGYFPDIFTFNILIHGYSTQLKMENALEILDVMLDNGVDPDVYTYNSLLNGLCKTSKFEDVMETYKTMVEKGCAPNLFTFNILLESLCRYRKLDEALGLLEEMKNKSVNPDAVTFGTLIDGFCKNGDLDGAYTLFRKMEEAYKVSSSTPTYNIIIHAFTEKLNVTMAEKLFQEMVDRCLGPDGYTYRLMVDGFCKTGNVNLGYKFLLEMMENGFIPSLTTLGRVINCLCVEDRVYEAAGIIHRMVQKGLVPEAVNTICDVDKKEVAAPKLVLEDLLKKSCITYYAYELLFDGLRDKRLRKKKGFTVVAI</sequence>
<name>PP120_ARATH</name>
<dbReference type="EMBL" id="AC011765">
    <property type="protein sequence ID" value="AAG52381.1"/>
    <property type="molecule type" value="Genomic_DNA"/>
</dbReference>
<dbReference type="EMBL" id="CP002684">
    <property type="protein sequence ID" value="AEE35612.1"/>
    <property type="molecule type" value="Genomic_DNA"/>
</dbReference>
<dbReference type="EMBL" id="CP002684">
    <property type="protein sequence ID" value="ANM59824.1"/>
    <property type="molecule type" value="Genomic_DNA"/>
</dbReference>
<dbReference type="EMBL" id="CP002684">
    <property type="protein sequence ID" value="ANM59825.1"/>
    <property type="molecule type" value="Genomic_DNA"/>
</dbReference>
<dbReference type="PIR" id="H96774">
    <property type="entry name" value="H96774"/>
</dbReference>
<dbReference type="RefSeq" id="NP_001322154.1">
    <property type="nucleotide sequence ID" value="NM_001334655.1"/>
</dbReference>
<dbReference type="RefSeq" id="NP_001322155.1">
    <property type="nucleotide sequence ID" value="NM_001334656.1"/>
</dbReference>
<dbReference type="RefSeq" id="NP_177597.1">
    <property type="nucleotide sequence ID" value="NM_106117.2"/>
</dbReference>
<dbReference type="SMR" id="Q9CA58"/>
<dbReference type="FunCoup" id="Q9CA58">
    <property type="interactions" value="467"/>
</dbReference>
<dbReference type="STRING" id="3702.Q9CA58"/>
<dbReference type="PaxDb" id="3702-AT1G74580.1"/>
<dbReference type="ProteomicsDB" id="249131"/>
<dbReference type="EnsemblPlants" id="AT1G74580.1">
    <property type="protein sequence ID" value="AT1G74580.1"/>
    <property type="gene ID" value="AT1G74580"/>
</dbReference>
<dbReference type="EnsemblPlants" id="AT1G74580.2">
    <property type="protein sequence ID" value="AT1G74580.2"/>
    <property type="gene ID" value="AT1G74580"/>
</dbReference>
<dbReference type="EnsemblPlants" id="AT1G74580.3">
    <property type="protein sequence ID" value="AT1G74580.3"/>
    <property type="gene ID" value="AT1G74580"/>
</dbReference>
<dbReference type="GeneID" id="843798"/>
<dbReference type="Gramene" id="AT1G74580.1">
    <property type="protein sequence ID" value="AT1G74580.1"/>
    <property type="gene ID" value="AT1G74580"/>
</dbReference>
<dbReference type="Gramene" id="AT1G74580.2">
    <property type="protein sequence ID" value="AT1G74580.2"/>
    <property type="gene ID" value="AT1G74580"/>
</dbReference>
<dbReference type="Gramene" id="AT1G74580.3">
    <property type="protein sequence ID" value="AT1G74580.3"/>
    <property type="gene ID" value="AT1G74580"/>
</dbReference>
<dbReference type="KEGG" id="ath:AT1G74580"/>
<dbReference type="Araport" id="AT1G74580"/>
<dbReference type="TAIR" id="AT1G74580"/>
<dbReference type="eggNOG" id="KOG4197">
    <property type="taxonomic scope" value="Eukaryota"/>
</dbReference>
<dbReference type="HOGENOM" id="CLU_002706_49_12_1"/>
<dbReference type="InParanoid" id="Q9CA58"/>
<dbReference type="OMA" id="QSYNAIM"/>
<dbReference type="PhylomeDB" id="Q9CA58"/>
<dbReference type="PRO" id="PR:Q9CA58"/>
<dbReference type="Proteomes" id="UP000006548">
    <property type="component" value="Chromosome 1"/>
</dbReference>
<dbReference type="ExpressionAtlas" id="Q9CA58">
    <property type="expression patterns" value="baseline and differential"/>
</dbReference>
<dbReference type="Gene3D" id="1.25.40.10">
    <property type="entry name" value="Tetratricopeptide repeat domain"/>
    <property type="match status" value="8"/>
</dbReference>
<dbReference type="InterPro" id="IPR002885">
    <property type="entry name" value="Pentatricopeptide_rpt"/>
</dbReference>
<dbReference type="InterPro" id="IPR011990">
    <property type="entry name" value="TPR-like_helical_dom_sf"/>
</dbReference>
<dbReference type="NCBIfam" id="TIGR00756">
    <property type="entry name" value="PPR"/>
    <property type="match status" value="16"/>
</dbReference>
<dbReference type="PANTHER" id="PTHR47938:SF35">
    <property type="entry name" value="PENTATRICOPEPTIDE REPEAT-CONTAINING PROTEIN 4, MITOCHONDRIAL-RELATED"/>
    <property type="match status" value="1"/>
</dbReference>
<dbReference type="PANTHER" id="PTHR47938">
    <property type="entry name" value="RESPIRATORY COMPLEX I CHAPERONE (CIA84), PUTATIVE (AFU_ORTHOLOGUE AFUA_2G06020)-RELATED"/>
    <property type="match status" value="1"/>
</dbReference>
<dbReference type="Pfam" id="PF01535">
    <property type="entry name" value="PPR"/>
    <property type="match status" value="2"/>
</dbReference>
<dbReference type="Pfam" id="PF12854">
    <property type="entry name" value="PPR_1"/>
    <property type="match status" value="1"/>
</dbReference>
<dbReference type="Pfam" id="PF13041">
    <property type="entry name" value="PPR_2"/>
    <property type="match status" value="7"/>
</dbReference>
<dbReference type="SUPFAM" id="SSF81901">
    <property type="entry name" value="HCP-like"/>
    <property type="match status" value="1"/>
</dbReference>
<dbReference type="PROSITE" id="PS51375">
    <property type="entry name" value="PPR"/>
    <property type="match status" value="19"/>
</dbReference>
<reference key="1">
    <citation type="journal article" date="2000" name="Nature">
        <title>Sequence and analysis of chromosome 1 of the plant Arabidopsis thaliana.</title>
        <authorList>
            <person name="Theologis A."/>
            <person name="Ecker J.R."/>
            <person name="Palm C.J."/>
            <person name="Federspiel N.A."/>
            <person name="Kaul S."/>
            <person name="White O."/>
            <person name="Alonso J."/>
            <person name="Altafi H."/>
            <person name="Araujo R."/>
            <person name="Bowman C.L."/>
            <person name="Brooks S.Y."/>
            <person name="Buehler E."/>
            <person name="Chan A."/>
            <person name="Chao Q."/>
            <person name="Chen H."/>
            <person name="Cheuk R.F."/>
            <person name="Chin C.W."/>
            <person name="Chung M.K."/>
            <person name="Conn L."/>
            <person name="Conway A.B."/>
            <person name="Conway A.R."/>
            <person name="Creasy T.H."/>
            <person name="Dewar K."/>
            <person name="Dunn P."/>
            <person name="Etgu P."/>
            <person name="Feldblyum T.V."/>
            <person name="Feng J.-D."/>
            <person name="Fong B."/>
            <person name="Fujii C.Y."/>
            <person name="Gill J.E."/>
            <person name="Goldsmith A.D."/>
            <person name="Haas B."/>
            <person name="Hansen N.F."/>
            <person name="Hughes B."/>
            <person name="Huizar L."/>
            <person name="Hunter J.L."/>
            <person name="Jenkins J."/>
            <person name="Johnson-Hopson C."/>
            <person name="Khan S."/>
            <person name="Khaykin E."/>
            <person name="Kim C.J."/>
            <person name="Koo H.L."/>
            <person name="Kremenetskaia I."/>
            <person name="Kurtz D.B."/>
            <person name="Kwan A."/>
            <person name="Lam B."/>
            <person name="Langin-Hooper S."/>
            <person name="Lee A."/>
            <person name="Lee J.M."/>
            <person name="Lenz C.A."/>
            <person name="Li J.H."/>
            <person name="Li Y.-P."/>
            <person name="Lin X."/>
            <person name="Liu S.X."/>
            <person name="Liu Z.A."/>
            <person name="Luros J.S."/>
            <person name="Maiti R."/>
            <person name="Marziali A."/>
            <person name="Militscher J."/>
            <person name="Miranda M."/>
            <person name="Nguyen M."/>
            <person name="Nierman W.C."/>
            <person name="Osborne B.I."/>
            <person name="Pai G."/>
            <person name="Peterson J."/>
            <person name="Pham P.K."/>
            <person name="Rizzo M."/>
            <person name="Rooney T."/>
            <person name="Rowley D."/>
            <person name="Sakano H."/>
            <person name="Salzberg S.L."/>
            <person name="Schwartz J.R."/>
            <person name="Shinn P."/>
            <person name="Southwick A.M."/>
            <person name="Sun H."/>
            <person name="Tallon L.J."/>
            <person name="Tambunga G."/>
            <person name="Toriumi M.J."/>
            <person name="Town C.D."/>
            <person name="Utterback T."/>
            <person name="Van Aken S."/>
            <person name="Vaysberg M."/>
            <person name="Vysotskaia V.S."/>
            <person name="Walker M."/>
            <person name="Wu D."/>
            <person name="Yu G."/>
            <person name="Fraser C.M."/>
            <person name="Venter J.C."/>
            <person name="Davis R.W."/>
        </authorList>
    </citation>
    <scope>NUCLEOTIDE SEQUENCE [LARGE SCALE GENOMIC DNA]</scope>
    <source>
        <strain>cv. Columbia</strain>
    </source>
</reference>
<reference key="2">
    <citation type="journal article" date="2017" name="Plant J.">
        <title>Araport11: a complete reannotation of the Arabidopsis thaliana reference genome.</title>
        <authorList>
            <person name="Cheng C.Y."/>
            <person name="Krishnakumar V."/>
            <person name="Chan A.P."/>
            <person name="Thibaud-Nissen F."/>
            <person name="Schobel S."/>
            <person name="Town C.D."/>
        </authorList>
    </citation>
    <scope>GENOME REANNOTATION</scope>
    <source>
        <strain>cv. Columbia</strain>
    </source>
</reference>
<reference key="3">
    <citation type="journal article" date="2004" name="Plant Cell">
        <title>Genome-wide analysis of Arabidopsis pentatricopeptide repeat proteins reveals their essential role in organelle biogenesis.</title>
        <authorList>
            <person name="Lurin C."/>
            <person name="Andres C."/>
            <person name="Aubourg S."/>
            <person name="Bellaoui M."/>
            <person name="Bitton F."/>
            <person name="Bruyere C."/>
            <person name="Caboche M."/>
            <person name="Debast C."/>
            <person name="Gualberto J."/>
            <person name="Hoffmann B."/>
            <person name="Lecharny A."/>
            <person name="Le Ret M."/>
            <person name="Martin-Magniette M.-L."/>
            <person name="Mireau H."/>
            <person name="Peeters N."/>
            <person name="Renou J.-P."/>
            <person name="Szurek B."/>
            <person name="Taconnat L."/>
            <person name="Small I."/>
        </authorList>
    </citation>
    <scope>GENE FAMILY</scope>
</reference>
<protein>
    <recommendedName>
        <fullName>Putative pentatricopeptide repeat-containing protein At1g74580</fullName>
    </recommendedName>
</protein>
<gene>
    <name type="ordered locus">At1g74580</name>
    <name type="ORF">F1M20.26</name>
</gene>
<feature type="chain" id="PRO_0000342861" description="Putative pentatricopeptide repeat-containing protein At1g74580">
    <location>
        <begin position="1"/>
        <end position="763"/>
    </location>
</feature>
<feature type="repeat" description="PPR 1">
    <location>
        <begin position="39"/>
        <end position="69"/>
    </location>
</feature>
<feature type="repeat" description="PPR 2">
    <location>
        <begin position="75"/>
        <end position="109"/>
    </location>
</feature>
<feature type="repeat" description="PPR 3">
    <location>
        <begin position="110"/>
        <end position="144"/>
    </location>
</feature>
<feature type="repeat" description="PPR 4">
    <location>
        <begin position="145"/>
        <end position="179"/>
    </location>
</feature>
<feature type="repeat" description="PPR 5">
    <location>
        <begin position="180"/>
        <end position="214"/>
    </location>
</feature>
<feature type="repeat" description="PPR 6">
    <location>
        <begin position="215"/>
        <end position="249"/>
    </location>
</feature>
<feature type="repeat" description="PPR 7">
    <location>
        <begin position="250"/>
        <end position="284"/>
    </location>
</feature>
<feature type="repeat" description="PPR 8">
    <location>
        <begin position="285"/>
        <end position="319"/>
    </location>
</feature>
<feature type="repeat" description="PPR 9">
    <location>
        <begin position="320"/>
        <end position="354"/>
    </location>
</feature>
<feature type="repeat" description="PPR 10">
    <location>
        <begin position="355"/>
        <end position="389"/>
    </location>
</feature>
<feature type="repeat" description="PPR 11">
    <location>
        <begin position="390"/>
        <end position="424"/>
    </location>
</feature>
<feature type="repeat" description="PPR 12">
    <location>
        <begin position="425"/>
        <end position="459"/>
    </location>
</feature>
<feature type="repeat" description="PPR 13">
    <location>
        <begin position="460"/>
        <end position="494"/>
    </location>
</feature>
<feature type="repeat" description="PPR 14">
    <location>
        <begin position="495"/>
        <end position="529"/>
    </location>
</feature>
<feature type="repeat" description="PPR 15">
    <location>
        <begin position="530"/>
        <end position="564"/>
    </location>
</feature>
<feature type="repeat" description="PPR 16">
    <location>
        <begin position="565"/>
        <end position="595"/>
    </location>
</feature>
<feature type="repeat" description="PPR 17">
    <location>
        <begin position="601"/>
        <end position="635"/>
    </location>
</feature>
<feature type="repeat" description="PPR 18">
    <location>
        <begin position="636"/>
        <end position="670"/>
    </location>
</feature>
<feature type="repeat" description="PPR 19">
    <location>
        <begin position="671"/>
        <end position="705"/>
    </location>
</feature>
<accession>Q9CA58</accession>
<proteinExistence type="inferred from homology"/>
<evidence type="ECO:0000305" key="1"/>
<comment type="similarity">
    <text evidence="1">Belongs to the PPR family. P subfamily.</text>
</comment>
<comment type="online information" name="Pentatricopeptide repeat proteins">
    <link uri="https://ppr.plantenergy.uwa.edu.au"/>
</comment>